<keyword id="KW-0597">Phosphoprotein</keyword>
<keyword id="KW-1185">Reference proteome</keyword>
<keyword id="KW-0687">Ribonucleoprotein</keyword>
<keyword id="KW-0689">Ribosomal protein</keyword>
<name>RLA1_CHICK</name>
<feature type="chain" id="PRO_0000157685" description="Large ribosomal subunit protein P1">
    <location>
        <begin position="1"/>
        <end position="114"/>
    </location>
</feature>
<feature type="region of interest" description="Disordered" evidence="2">
    <location>
        <begin position="68"/>
        <end position="114"/>
    </location>
</feature>
<feature type="compositionally biased region" description="Low complexity" evidence="2">
    <location>
        <begin position="70"/>
        <end position="79"/>
    </location>
</feature>
<feature type="compositionally biased region" description="Basic and acidic residues" evidence="2">
    <location>
        <begin position="89"/>
        <end position="100"/>
    </location>
</feature>
<feature type="modified residue" description="Phosphoserine" evidence="1">
    <location>
        <position position="101"/>
    </location>
</feature>
<feature type="modified residue" description="Phosphoserine" evidence="1">
    <location>
        <position position="104"/>
    </location>
</feature>
<organism>
    <name type="scientific">Gallus gallus</name>
    <name type="common">Chicken</name>
    <dbReference type="NCBI Taxonomy" id="9031"/>
    <lineage>
        <taxon>Eukaryota</taxon>
        <taxon>Metazoa</taxon>
        <taxon>Chordata</taxon>
        <taxon>Craniata</taxon>
        <taxon>Vertebrata</taxon>
        <taxon>Euteleostomi</taxon>
        <taxon>Archelosauria</taxon>
        <taxon>Archosauria</taxon>
        <taxon>Dinosauria</taxon>
        <taxon>Saurischia</taxon>
        <taxon>Theropoda</taxon>
        <taxon>Coelurosauria</taxon>
        <taxon>Aves</taxon>
        <taxon>Neognathae</taxon>
        <taxon>Galloanserae</taxon>
        <taxon>Galliformes</taxon>
        <taxon>Phasianidae</taxon>
        <taxon>Phasianinae</taxon>
        <taxon>Gallus</taxon>
    </lineage>
</organism>
<gene>
    <name type="primary">RPLP1</name>
</gene>
<evidence type="ECO:0000250" key="1"/>
<evidence type="ECO:0000256" key="2">
    <source>
        <dbReference type="SAM" id="MobiDB-lite"/>
    </source>
</evidence>
<evidence type="ECO:0000305" key="3"/>
<sequence>MASVSELACIYSALILHDDEVTVTEDKINALIKAAGVNVEPFWPGLFAKALANIDIGSLICNVGAGGGAPAAAAPAGGAAPAGGGAAPAEEKKEEEKKEESEESDDDMGFGLFD</sequence>
<reference key="1">
    <citation type="journal article" date="1988" name="Eur. J. Biochem.">
        <title>The complete sequence of a chicken-muscle cDNA encoding the acidic ribosomal protein P1.</title>
        <authorList>
            <person name="Ferro J.A."/>
            <person name="Reinach F.C."/>
        </authorList>
    </citation>
    <scope>NUCLEOTIDE SEQUENCE [MRNA]</scope>
</reference>
<accession>P18660</accession>
<dbReference type="EMBL" id="X13876">
    <property type="protein sequence ID" value="CAA32080.1"/>
    <property type="molecule type" value="mRNA"/>
</dbReference>
<dbReference type="PIR" id="S02029">
    <property type="entry name" value="R5CH2E"/>
</dbReference>
<dbReference type="RefSeq" id="NP_990653.1">
    <property type="nucleotide sequence ID" value="NM_205322.2"/>
</dbReference>
<dbReference type="SMR" id="P18660"/>
<dbReference type="BioGRID" id="676522">
    <property type="interactions" value="1"/>
</dbReference>
<dbReference type="FunCoup" id="P18660">
    <property type="interactions" value="1799"/>
</dbReference>
<dbReference type="STRING" id="9031.ENSGALP00000058036"/>
<dbReference type="PaxDb" id="9031-ENSGALP00000026015"/>
<dbReference type="GeneID" id="396262"/>
<dbReference type="KEGG" id="gga:396262"/>
<dbReference type="CTD" id="6176"/>
<dbReference type="VEuPathDB" id="HostDB:geneid_396262"/>
<dbReference type="eggNOG" id="KOG1762">
    <property type="taxonomic scope" value="Eukaryota"/>
</dbReference>
<dbReference type="HOGENOM" id="CLU_114656_1_2_1"/>
<dbReference type="InParanoid" id="P18660"/>
<dbReference type="OMA" id="REELMCV"/>
<dbReference type="OrthoDB" id="2194681at2759"/>
<dbReference type="PhylomeDB" id="P18660"/>
<dbReference type="TreeFam" id="TF312932"/>
<dbReference type="Reactome" id="R-GGA-1799339">
    <property type="pathway name" value="SRP-dependent cotranslational protein targeting to membrane"/>
</dbReference>
<dbReference type="Reactome" id="R-GGA-72689">
    <property type="pathway name" value="Formation of a pool of free 40S subunits"/>
</dbReference>
<dbReference type="Reactome" id="R-GGA-72706">
    <property type="pathway name" value="GTP hydrolysis and joining of the 60S ribosomal subunit"/>
</dbReference>
<dbReference type="Reactome" id="R-GGA-975956">
    <property type="pathway name" value="Nonsense Mediated Decay (NMD) independent of the Exon Junction Complex (EJC)"/>
</dbReference>
<dbReference type="Reactome" id="R-GGA-975957">
    <property type="pathway name" value="Nonsense Mediated Decay (NMD) enhanced by the Exon Junction Complex (EJC)"/>
</dbReference>
<dbReference type="PRO" id="PR:P18660"/>
<dbReference type="Proteomes" id="UP000000539">
    <property type="component" value="Chromosome 2"/>
</dbReference>
<dbReference type="Bgee" id="ENSGALG00000030878">
    <property type="expression patterns" value="Expressed in granulocyte and 13 other cell types or tissues"/>
</dbReference>
<dbReference type="GO" id="GO:0022625">
    <property type="term" value="C:cytosolic large ribosomal subunit"/>
    <property type="evidence" value="ECO:0000318"/>
    <property type="project" value="GO_Central"/>
</dbReference>
<dbReference type="GO" id="GO:0030295">
    <property type="term" value="F:protein kinase activator activity"/>
    <property type="evidence" value="ECO:0000318"/>
    <property type="project" value="GO_Central"/>
</dbReference>
<dbReference type="GO" id="GO:0043021">
    <property type="term" value="F:ribonucleoprotein complex binding"/>
    <property type="evidence" value="ECO:0000318"/>
    <property type="project" value="GO_Central"/>
</dbReference>
<dbReference type="GO" id="GO:0003735">
    <property type="term" value="F:structural constituent of ribosome"/>
    <property type="evidence" value="ECO:0000318"/>
    <property type="project" value="GO_Central"/>
</dbReference>
<dbReference type="GO" id="GO:0002181">
    <property type="term" value="P:cytoplasmic translation"/>
    <property type="evidence" value="ECO:0000318"/>
    <property type="project" value="GO_Central"/>
</dbReference>
<dbReference type="GO" id="GO:0006414">
    <property type="term" value="P:translational elongation"/>
    <property type="evidence" value="ECO:0007669"/>
    <property type="project" value="InterPro"/>
</dbReference>
<dbReference type="CDD" id="cd05831">
    <property type="entry name" value="Ribosomal_P1"/>
    <property type="match status" value="1"/>
</dbReference>
<dbReference type="FunFam" id="1.10.10.1410:FF:000001">
    <property type="entry name" value="60S acidic ribosomal protein P1"/>
    <property type="match status" value="1"/>
</dbReference>
<dbReference type="Gene3D" id="1.10.10.1410">
    <property type="match status" value="1"/>
</dbReference>
<dbReference type="HAMAP" id="MF_01478">
    <property type="entry name" value="Ribosomal_L12_arch"/>
    <property type="match status" value="1"/>
</dbReference>
<dbReference type="InterPro" id="IPR038716">
    <property type="entry name" value="P1/P2_N_sf"/>
</dbReference>
<dbReference type="InterPro" id="IPR027534">
    <property type="entry name" value="Ribosomal_P1/P2"/>
</dbReference>
<dbReference type="PANTHER" id="PTHR45696">
    <property type="entry name" value="60S ACIDIC RIBOSOMAL PROTEIN P1"/>
    <property type="match status" value="1"/>
</dbReference>
<dbReference type="PANTHER" id="PTHR45696:SF10">
    <property type="entry name" value="LARGE RIBOSOMAL SUBUNIT PROTEIN P1"/>
    <property type="match status" value="1"/>
</dbReference>
<dbReference type="Pfam" id="PF00428">
    <property type="entry name" value="Ribosomal_60s"/>
    <property type="match status" value="1"/>
</dbReference>
<protein>
    <recommendedName>
        <fullName evidence="3">Large ribosomal subunit protein P1</fullName>
    </recommendedName>
    <alternativeName>
        <fullName>60S acidic ribosomal protein P1</fullName>
    </alternativeName>
</protein>
<comment type="function">
    <text>Plays an important role in the elongation step of protein synthesis.</text>
</comment>
<comment type="subunit">
    <text evidence="1">Heterodimer with RPLP2 at the lateral ribosomal stalk of the large ribosomal subunit.</text>
</comment>
<comment type="similarity">
    <text evidence="3">Belongs to the eukaryotic ribosomal protein P1/P2 family.</text>
</comment>
<proteinExistence type="inferred from homology"/>